<accession>Q7RTT3</accession>
<keyword id="KW-0597">Phosphoprotein</keyword>
<keyword id="KW-1185">Reference proteome</keyword>
<keyword id="KW-0804">Transcription</keyword>
<keyword id="KW-0805">Transcription regulation</keyword>
<proteinExistence type="uncertain"/>
<sequence>MNGDDAFARRPRAGSQIPEKIQKAFDDIAKYFSKKEWEKMKSSEKIIYVYMKRKYEAMTKLGFKATLPPFMCNTGATDLQGNDFDNDRNHRNQVERSQMTFGRLQGIFPKIMPKKPAEVGNDSKEVPEASGLQNDGKQLCPPGKPTTSEKINKASGPKRGKHAWTHRLRERKQLVIYEEISDPEEDDE</sequence>
<name>SSX9_HUMAN</name>
<organism>
    <name type="scientific">Homo sapiens</name>
    <name type="common">Human</name>
    <dbReference type="NCBI Taxonomy" id="9606"/>
    <lineage>
        <taxon>Eukaryota</taxon>
        <taxon>Metazoa</taxon>
        <taxon>Chordata</taxon>
        <taxon>Craniata</taxon>
        <taxon>Vertebrata</taxon>
        <taxon>Euteleostomi</taxon>
        <taxon>Mammalia</taxon>
        <taxon>Eutheria</taxon>
        <taxon>Euarchontoglires</taxon>
        <taxon>Primates</taxon>
        <taxon>Haplorrhini</taxon>
        <taxon>Catarrhini</taxon>
        <taxon>Hominidae</taxon>
        <taxon>Homo</taxon>
    </lineage>
</organism>
<reference key="1">
    <citation type="journal article" date="2005" name="Nature">
        <title>The DNA sequence of the human X chromosome.</title>
        <authorList>
            <person name="Ross M.T."/>
            <person name="Grafham D.V."/>
            <person name="Coffey A.J."/>
            <person name="Scherer S."/>
            <person name="McLay K."/>
            <person name="Muzny D."/>
            <person name="Platzer M."/>
            <person name="Howell G.R."/>
            <person name="Burrows C."/>
            <person name="Bird C.P."/>
            <person name="Frankish A."/>
            <person name="Lovell F.L."/>
            <person name="Howe K.L."/>
            <person name="Ashurst J.L."/>
            <person name="Fulton R.S."/>
            <person name="Sudbrak R."/>
            <person name="Wen G."/>
            <person name="Jones M.C."/>
            <person name="Hurles M.E."/>
            <person name="Andrews T.D."/>
            <person name="Scott C.E."/>
            <person name="Searle S."/>
            <person name="Ramser J."/>
            <person name="Whittaker A."/>
            <person name="Deadman R."/>
            <person name="Carter N.P."/>
            <person name="Hunt S.E."/>
            <person name="Chen R."/>
            <person name="Cree A."/>
            <person name="Gunaratne P."/>
            <person name="Havlak P."/>
            <person name="Hodgson A."/>
            <person name="Metzker M.L."/>
            <person name="Richards S."/>
            <person name="Scott G."/>
            <person name="Steffen D."/>
            <person name="Sodergren E."/>
            <person name="Wheeler D.A."/>
            <person name="Worley K.C."/>
            <person name="Ainscough R."/>
            <person name="Ambrose K.D."/>
            <person name="Ansari-Lari M.A."/>
            <person name="Aradhya S."/>
            <person name="Ashwell R.I."/>
            <person name="Babbage A.K."/>
            <person name="Bagguley C.L."/>
            <person name="Ballabio A."/>
            <person name="Banerjee R."/>
            <person name="Barker G.E."/>
            <person name="Barlow K.F."/>
            <person name="Barrett I.P."/>
            <person name="Bates K.N."/>
            <person name="Beare D.M."/>
            <person name="Beasley H."/>
            <person name="Beasley O."/>
            <person name="Beck A."/>
            <person name="Bethel G."/>
            <person name="Blechschmidt K."/>
            <person name="Brady N."/>
            <person name="Bray-Allen S."/>
            <person name="Bridgeman A.M."/>
            <person name="Brown A.J."/>
            <person name="Brown M.J."/>
            <person name="Bonnin D."/>
            <person name="Bruford E.A."/>
            <person name="Buhay C."/>
            <person name="Burch P."/>
            <person name="Burford D."/>
            <person name="Burgess J."/>
            <person name="Burrill W."/>
            <person name="Burton J."/>
            <person name="Bye J.M."/>
            <person name="Carder C."/>
            <person name="Carrel L."/>
            <person name="Chako J."/>
            <person name="Chapman J.C."/>
            <person name="Chavez D."/>
            <person name="Chen E."/>
            <person name="Chen G."/>
            <person name="Chen Y."/>
            <person name="Chen Z."/>
            <person name="Chinault C."/>
            <person name="Ciccodicola A."/>
            <person name="Clark S.Y."/>
            <person name="Clarke G."/>
            <person name="Clee C.M."/>
            <person name="Clegg S."/>
            <person name="Clerc-Blankenburg K."/>
            <person name="Clifford K."/>
            <person name="Cobley V."/>
            <person name="Cole C.G."/>
            <person name="Conquer J.S."/>
            <person name="Corby N."/>
            <person name="Connor R.E."/>
            <person name="David R."/>
            <person name="Davies J."/>
            <person name="Davis C."/>
            <person name="Davis J."/>
            <person name="Delgado O."/>
            <person name="Deshazo D."/>
            <person name="Dhami P."/>
            <person name="Ding Y."/>
            <person name="Dinh H."/>
            <person name="Dodsworth S."/>
            <person name="Draper H."/>
            <person name="Dugan-Rocha S."/>
            <person name="Dunham A."/>
            <person name="Dunn M."/>
            <person name="Durbin K.J."/>
            <person name="Dutta I."/>
            <person name="Eades T."/>
            <person name="Ellwood M."/>
            <person name="Emery-Cohen A."/>
            <person name="Errington H."/>
            <person name="Evans K.L."/>
            <person name="Faulkner L."/>
            <person name="Francis F."/>
            <person name="Frankland J."/>
            <person name="Fraser A.E."/>
            <person name="Galgoczy P."/>
            <person name="Gilbert J."/>
            <person name="Gill R."/>
            <person name="Gloeckner G."/>
            <person name="Gregory S.G."/>
            <person name="Gribble S."/>
            <person name="Griffiths C."/>
            <person name="Grocock R."/>
            <person name="Gu Y."/>
            <person name="Gwilliam R."/>
            <person name="Hamilton C."/>
            <person name="Hart E.A."/>
            <person name="Hawes A."/>
            <person name="Heath P.D."/>
            <person name="Heitmann K."/>
            <person name="Hennig S."/>
            <person name="Hernandez J."/>
            <person name="Hinzmann B."/>
            <person name="Ho S."/>
            <person name="Hoffs M."/>
            <person name="Howden P.J."/>
            <person name="Huckle E.J."/>
            <person name="Hume J."/>
            <person name="Hunt P.J."/>
            <person name="Hunt A.R."/>
            <person name="Isherwood J."/>
            <person name="Jacob L."/>
            <person name="Johnson D."/>
            <person name="Jones S."/>
            <person name="de Jong P.J."/>
            <person name="Joseph S.S."/>
            <person name="Keenan S."/>
            <person name="Kelly S."/>
            <person name="Kershaw J.K."/>
            <person name="Khan Z."/>
            <person name="Kioschis P."/>
            <person name="Klages S."/>
            <person name="Knights A.J."/>
            <person name="Kosiura A."/>
            <person name="Kovar-Smith C."/>
            <person name="Laird G.K."/>
            <person name="Langford C."/>
            <person name="Lawlor S."/>
            <person name="Leversha M."/>
            <person name="Lewis L."/>
            <person name="Liu W."/>
            <person name="Lloyd C."/>
            <person name="Lloyd D.M."/>
            <person name="Loulseged H."/>
            <person name="Loveland J.E."/>
            <person name="Lovell J.D."/>
            <person name="Lozado R."/>
            <person name="Lu J."/>
            <person name="Lyne R."/>
            <person name="Ma J."/>
            <person name="Maheshwari M."/>
            <person name="Matthews L.H."/>
            <person name="McDowall J."/>
            <person name="McLaren S."/>
            <person name="McMurray A."/>
            <person name="Meidl P."/>
            <person name="Meitinger T."/>
            <person name="Milne S."/>
            <person name="Miner G."/>
            <person name="Mistry S.L."/>
            <person name="Morgan M."/>
            <person name="Morris S."/>
            <person name="Mueller I."/>
            <person name="Mullikin J.C."/>
            <person name="Nguyen N."/>
            <person name="Nordsiek G."/>
            <person name="Nyakatura G."/>
            <person name="O'dell C.N."/>
            <person name="Okwuonu G."/>
            <person name="Palmer S."/>
            <person name="Pandian R."/>
            <person name="Parker D."/>
            <person name="Parrish J."/>
            <person name="Pasternak S."/>
            <person name="Patel D."/>
            <person name="Pearce A.V."/>
            <person name="Pearson D.M."/>
            <person name="Pelan S.E."/>
            <person name="Perez L."/>
            <person name="Porter K.M."/>
            <person name="Ramsey Y."/>
            <person name="Reichwald K."/>
            <person name="Rhodes S."/>
            <person name="Ridler K.A."/>
            <person name="Schlessinger D."/>
            <person name="Schueler M.G."/>
            <person name="Sehra H.K."/>
            <person name="Shaw-Smith C."/>
            <person name="Shen H."/>
            <person name="Sheridan E.M."/>
            <person name="Shownkeen R."/>
            <person name="Skuce C.D."/>
            <person name="Smith M.L."/>
            <person name="Sotheran E.C."/>
            <person name="Steingruber H.E."/>
            <person name="Steward C.A."/>
            <person name="Storey R."/>
            <person name="Swann R.M."/>
            <person name="Swarbreck D."/>
            <person name="Tabor P.E."/>
            <person name="Taudien S."/>
            <person name="Taylor T."/>
            <person name="Teague B."/>
            <person name="Thomas K."/>
            <person name="Thorpe A."/>
            <person name="Timms K."/>
            <person name="Tracey A."/>
            <person name="Trevanion S."/>
            <person name="Tromans A.C."/>
            <person name="d'Urso M."/>
            <person name="Verduzco D."/>
            <person name="Villasana D."/>
            <person name="Waldron L."/>
            <person name="Wall M."/>
            <person name="Wang Q."/>
            <person name="Warren J."/>
            <person name="Warry G.L."/>
            <person name="Wei X."/>
            <person name="West A."/>
            <person name="Whitehead S.L."/>
            <person name="Whiteley M.N."/>
            <person name="Wilkinson J.E."/>
            <person name="Willey D.L."/>
            <person name="Williams G."/>
            <person name="Williams L."/>
            <person name="Williamson A."/>
            <person name="Williamson H."/>
            <person name="Wilming L."/>
            <person name="Woodmansey R.L."/>
            <person name="Wray P.W."/>
            <person name="Yen J."/>
            <person name="Zhang J."/>
            <person name="Zhou J."/>
            <person name="Zoghbi H."/>
            <person name="Zorilla S."/>
            <person name="Buck D."/>
            <person name="Reinhardt R."/>
            <person name="Poustka A."/>
            <person name="Rosenthal A."/>
            <person name="Lehrach H."/>
            <person name="Meindl A."/>
            <person name="Minx P.J."/>
            <person name="Hillier L.W."/>
            <person name="Willard H.F."/>
            <person name="Wilson R.K."/>
            <person name="Waterston R.H."/>
            <person name="Rice C.M."/>
            <person name="Vaudin M."/>
            <person name="Coulson A."/>
            <person name="Nelson D.L."/>
            <person name="Weinstock G."/>
            <person name="Sulston J.E."/>
            <person name="Durbin R.M."/>
            <person name="Hubbard T."/>
            <person name="Gibbs R.A."/>
            <person name="Beck S."/>
            <person name="Rogers J."/>
            <person name="Bentley D.R."/>
        </authorList>
    </citation>
    <scope>NUCLEOTIDE SEQUENCE [LARGE SCALE GENOMIC DNA]</scope>
</reference>
<reference key="2">
    <citation type="journal article" date="2002" name="Int. J. Cancer">
        <title>The SSX gene family: characterization of 9 complete genes.</title>
        <authorList>
            <person name="Gure A.O."/>
            <person name="Wei I.J."/>
            <person name="Old L.J."/>
            <person name="Chen Y.-T."/>
        </authorList>
    </citation>
    <scope>IDENTIFICATION</scope>
    <scope>TISSUE SPECIFICITY</scope>
</reference>
<gene>
    <name evidence="6" type="primary">SSX9P</name>
    <name type="synonym">SSX9</name>
</gene>
<dbReference type="EMBL" id="AL606490">
    <property type="status" value="NOT_ANNOTATED_CDS"/>
    <property type="molecule type" value="Genomic_DNA"/>
</dbReference>
<dbReference type="EMBL" id="BK000689">
    <property type="protein sequence ID" value="DAA00376.1"/>
    <property type="molecule type" value="Genomic_DNA"/>
</dbReference>
<dbReference type="FunCoup" id="Q7RTT3">
    <property type="interactions" value="303"/>
</dbReference>
<dbReference type="IntAct" id="Q7RTT3">
    <property type="interactions" value="1"/>
</dbReference>
<dbReference type="iPTMnet" id="Q7RTT3"/>
<dbReference type="PhosphoSitePlus" id="Q7RTT3"/>
<dbReference type="BioMuta" id="HGNC:19655"/>
<dbReference type="DMDM" id="74749935"/>
<dbReference type="MassIVE" id="Q7RTT3"/>
<dbReference type="PeptideAtlas" id="Q7RTT3"/>
<dbReference type="ProteomicsDB" id="68898"/>
<dbReference type="AGR" id="HGNC:19655"/>
<dbReference type="GeneCards" id="SSX9P"/>
<dbReference type="HGNC" id="HGNC:19655">
    <property type="gene designation" value="SSX9P"/>
</dbReference>
<dbReference type="MIM" id="300544">
    <property type="type" value="gene"/>
</dbReference>
<dbReference type="neXtProt" id="NX_Q7RTT3"/>
<dbReference type="InParanoid" id="Q7RTT3"/>
<dbReference type="PAN-GO" id="Q7RTT3">
    <property type="GO annotations" value="1 GO annotation based on evolutionary models"/>
</dbReference>
<dbReference type="PhylomeDB" id="Q7RTT3"/>
<dbReference type="TreeFam" id="TF338517"/>
<dbReference type="PathwayCommons" id="Q7RTT3"/>
<dbReference type="SignaLink" id="Q7RTT3"/>
<dbReference type="Pharos" id="Q7RTT3">
    <property type="development level" value="Tdark"/>
</dbReference>
<dbReference type="PRO" id="PR:Q7RTT3"/>
<dbReference type="Proteomes" id="UP000005640">
    <property type="component" value="Unplaced"/>
</dbReference>
<dbReference type="RNAct" id="Q7RTT3">
    <property type="molecule type" value="protein"/>
</dbReference>
<dbReference type="GO" id="GO:0005634">
    <property type="term" value="C:nucleus"/>
    <property type="evidence" value="ECO:0000318"/>
    <property type="project" value="GO_Central"/>
</dbReference>
<dbReference type="GO" id="GO:0006355">
    <property type="term" value="P:regulation of DNA-templated transcription"/>
    <property type="evidence" value="ECO:0007669"/>
    <property type="project" value="InterPro"/>
</dbReference>
<dbReference type="InterPro" id="IPR003655">
    <property type="entry name" value="aKRAB"/>
</dbReference>
<dbReference type="InterPro" id="IPR001909">
    <property type="entry name" value="KRAB"/>
</dbReference>
<dbReference type="InterPro" id="IPR036051">
    <property type="entry name" value="KRAB_dom_sf"/>
</dbReference>
<dbReference type="InterPro" id="IPR019041">
    <property type="entry name" value="SSXRD_motif"/>
</dbReference>
<dbReference type="PANTHER" id="PTHR14112:SF30">
    <property type="entry name" value="PROTEIN SSX7-RELATED"/>
    <property type="match status" value="1"/>
</dbReference>
<dbReference type="PANTHER" id="PTHR14112">
    <property type="entry name" value="SYNOVIAL SARCOMA, X MEMBER"/>
    <property type="match status" value="1"/>
</dbReference>
<dbReference type="Pfam" id="PF09514">
    <property type="entry name" value="SSXRD"/>
    <property type="match status" value="1"/>
</dbReference>
<dbReference type="SMART" id="SM00349">
    <property type="entry name" value="KRAB"/>
    <property type="match status" value="1"/>
</dbReference>
<dbReference type="SUPFAM" id="SSF109640">
    <property type="entry name" value="KRAB domain (Kruppel-associated box)"/>
    <property type="match status" value="1"/>
</dbReference>
<dbReference type="PROSITE" id="PS50806">
    <property type="entry name" value="KRAB_RELATED"/>
    <property type="match status" value="1"/>
</dbReference>
<feature type="chain" id="PRO_0000227813" description="Putative protein SSX9">
    <location>
        <begin position="1"/>
        <end position="188"/>
    </location>
</feature>
<feature type="domain" description="KRAB-related" evidence="2">
    <location>
        <begin position="20"/>
        <end position="83"/>
    </location>
</feature>
<feature type="region of interest" description="Disordered" evidence="3">
    <location>
        <begin position="114"/>
        <end position="165"/>
    </location>
</feature>
<feature type="compositionally biased region" description="Basic and acidic residues" evidence="3">
    <location>
        <begin position="115"/>
        <end position="127"/>
    </location>
</feature>
<feature type="compositionally biased region" description="Basic residues" evidence="3">
    <location>
        <begin position="156"/>
        <end position="165"/>
    </location>
</feature>
<feature type="modified residue" description="Phosphoserine" evidence="1">
    <location>
        <position position="123"/>
    </location>
</feature>
<feature type="sequence variant" id="VAR_053695" description="In dbSNP:rs4598385.">
    <original>C</original>
    <variation>R</variation>
    <location>
        <position position="72"/>
    </location>
</feature>
<feature type="sequence variant" id="VAR_060113" description="In dbSNP:rs6609702.">
    <original>S</original>
    <variation>P</variation>
    <location>
        <position position="97"/>
    </location>
</feature>
<evidence type="ECO:0000250" key="1">
    <source>
        <dbReference type="UniProtKB" id="Q16384"/>
    </source>
</evidence>
<evidence type="ECO:0000255" key="2">
    <source>
        <dbReference type="PROSITE-ProRule" id="PRU00120"/>
    </source>
</evidence>
<evidence type="ECO:0000256" key="3">
    <source>
        <dbReference type="SAM" id="MobiDB-lite"/>
    </source>
</evidence>
<evidence type="ECO:0000269" key="4">
    <source>
    </source>
</evidence>
<evidence type="ECO:0000305" key="5"/>
<evidence type="ECO:0000312" key="6">
    <source>
        <dbReference type="HGNC" id="HGNC:19655"/>
    </source>
</evidence>
<comment type="function">
    <text>Could act as a modulator of transcription.</text>
</comment>
<comment type="tissue specificity">
    <text evidence="4">Not detected in any normal or tumor tissues.</text>
</comment>
<comment type="similarity">
    <text evidence="5">Belongs to the SSX family.</text>
</comment>
<comment type="caution">
    <text evidence="5">Could be the product of a pseudogene.</text>
</comment>
<protein>
    <recommendedName>
        <fullName>Putative protein SSX9</fullName>
    </recommendedName>
</protein>